<organism>
    <name type="scientific">Shewanella pealeana (strain ATCC 700345 / ANG-SQ1)</name>
    <dbReference type="NCBI Taxonomy" id="398579"/>
    <lineage>
        <taxon>Bacteria</taxon>
        <taxon>Pseudomonadati</taxon>
        <taxon>Pseudomonadota</taxon>
        <taxon>Gammaproteobacteria</taxon>
        <taxon>Alteromonadales</taxon>
        <taxon>Shewanellaceae</taxon>
        <taxon>Shewanella</taxon>
    </lineage>
</organism>
<dbReference type="EMBL" id="CP000851">
    <property type="protein sequence ID" value="ABV88397.1"/>
    <property type="molecule type" value="Genomic_DNA"/>
</dbReference>
<dbReference type="RefSeq" id="WP_012156301.1">
    <property type="nucleotide sequence ID" value="NC_009901.1"/>
</dbReference>
<dbReference type="SMR" id="A8H760"/>
<dbReference type="STRING" id="398579.Spea_3080"/>
<dbReference type="KEGG" id="spl:Spea_3080"/>
<dbReference type="eggNOG" id="COG0443">
    <property type="taxonomic scope" value="Bacteria"/>
</dbReference>
<dbReference type="HOGENOM" id="CLU_005965_2_1_6"/>
<dbReference type="OrthoDB" id="9766019at2"/>
<dbReference type="Proteomes" id="UP000002608">
    <property type="component" value="Chromosome"/>
</dbReference>
<dbReference type="GO" id="GO:0005524">
    <property type="term" value="F:ATP binding"/>
    <property type="evidence" value="ECO:0007669"/>
    <property type="project" value="UniProtKB-UniRule"/>
</dbReference>
<dbReference type="GO" id="GO:0140662">
    <property type="term" value="F:ATP-dependent protein folding chaperone"/>
    <property type="evidence" value="ECO:0007669"/>
    <property type="project" value="InterPro"/>
</dbReference>
<dbReference type="GO" id="GO:0051082">
    <property type="term" value="F:unfolded protein binding"/>
    <property type="evidence" value="ECO:0007669"/>
    <property type="project" value="InterPro"/>
</dbReference>
<dbReference type="CDD" id="cd10234">
    <property type="entry name" value="ASKHA_NBD_HSP70_DnaK-like"/>
    <property type="match status" value="1"/>
</dbReference>
<dbReference type="FunFam" id="2.60.34.10:FF:000014">
    <property type="entry name" value="Chaperone protein DnaK HSP70"/>
    <property type="match status" value="1"/>
</dbReference>
<dbReference type="FunFam" id="3.30.30.30:FF:000003">
    <property type="entry name" value="Heat shock protein 9"/>
    <property type="match status" value="1"/>
</dbReference>
<dbReference type="FunFam" id="1.20.1270.10:FF:000001">
    <property type="entry name" value="Molecular chaperone DnaK"/>
    <property type="match status" value="1"/>
</dbReference>
<dbReference type="FunFam" id="3.30.420.40:FF:000004">
    <property type="entry name" value="Molecular chaperone DnaK"/>
    <property type="match status" value="1"/>
</dbReference>
<dbReference type="FunFam" id="3.90.640.10:FF:000003">
    <property type="entry name" value="Molecular chaperone DnaK"/>
    <property type="match status" value="1"/>
</dbReference>
<dbReference type="Gene3D" id="1.20.1270.10">
    <property type="match status" value="1"/>
</dbReference>
<dbReference type="Gene3D" id="3.30.420.40">
    <property type="match status" value="2"/>
</dbReference>
<dbReference type="Gene3D" id="3.90.640.10">
    <property type="entry name" value="Actin, Chain A, domain 4"/>
    <property type="match status" value="1"/>
</dbReference>
<dbReference type="Gene3D" id="2.60.34.10">
    <property type="entry name" value="Substrate Binding Domain Of DNAk, Chain A, domain 1"/>
    <property type="match status" value="1"/>
</dbReference>
<dbReference type="HAMAP" id="MF_00332">
    <property type="entry name" value="DnaK"/>
    <property type="match status" value="1"/>
</dbReference>
<dbReference type="InterPro" id="IPR043129">
    <property type="entry name" value="ATPase_NBD"/>
</dbReference>
<dbReference type="InterPro" id="IPR012725">
    <property type="entry name" value="Chaperone_DnaK"/>
</dbReference>
<dbReference type="InterPro" id="IPR018181">
    <property type="entry name" value="Heat_shock_70_CS"/>
</dbReference>
<dbReference type="InterPro" id="IPR029048">
    <property type="entry name" value="HSP70_C_sf"/>
</dbReference>
<dbReference type="InterPro" id="IPR029047">
    <property type="entry name" value="HSP70_peptide-bd_sf"/>
</dbReference>
<dbReference type="InterPro" id="IPR013126">
    <property type="entry name" value="Hsp_70_fam"/>
</dbReference>
<dbReference type="NCBIfam" id="NF001413">
    <property type="entry name" value="PRK00290.1"/>
    <property type="match status" value="1"/>
</dbReference>
<dbReference type="NCBIfam" id="TIGR02350">
    <property type="entry name" value="prok_dnaK"/>
    <property type="match status" value="1"/>
</dbReference>
<dbReference type="PANTHER" id="PTHR19375">
    <property type="entry name" value="HEAT SHOCK PROTEIN 70KDA"/>
    <property type="match status" value="1"/>
</dbReference>
<dbReference type="Pfam" id="PF00012">
    <property type="entry name" value="HSP70"/>
    <property type="match status" value="1"/>
</dbReference>
<dbReference type="PRINTS" id="PR00301">
    <property type="entry name" value="HEATSHOCK70"/>
</dbReference>
<dbReference type="SUPFAM" id="SSF53067">
    <property type="entry name" value="Actin-like ATPase domain"/>
    <property type="match status" value="2"/>
</dbReference>
<dbReference type="SUPFAM" id="SSF100920">
    <property type="entry name" value="Heat shock protein 70kD (HSP70), peptide-binding domain"/>
    <property type="match status" value="1"/>
</dbReference>
<dbReference type="PROSITE" id="PS00297">
    <property type="entry name" value="HSP70_1"/>
    <property type="match status" value="1"/>
</dbReference>
<dbReference type="PROSITE" id="PS00329">
    <property type="entry name" value="HSP70_2"/>
    <property type="match status" value="1"/>
</dbReference>
<dbReference type="PROSITE" id="PS01036">
    <property type="entry name" value="HSP70_3"/>
    <property type="match status" value="1"/>
</dbReference>
<gene>
    <name evidence="1" type="primary">dnaK</name>
    <name type="ordered locus">Spea_3080</name>
</gene>
<reference key="1">
    <citation type="submission" date="2007-10" db="EMBL/GenBank/DDBJ databases">
        <title>Complete sequence of Shewanella pealeana ATCC 700345.</title>
        <authorList>
            <consortium name="US DOE Joint Genome Institute"/>
            <person name="Copeland A."/>
            <person name="Lucas S."/>
            <person name="Lapidus A."/>
            <person name="Barry K."/>
            <person name="Glavina del Rio T."/>
            <person name="Dalin E."/>
            <person name="Tice H."/>
            <person name="Pitluck S."/>
            <person name="Chertkov O."/>
            <person name="Brettin T."/>
            <person name="Bruce D."/>
            <person name="Detter J.C."/>
            <person name="Han C."/>
            <person name="Schmutz J."/>
            <person name="Larimer F."/>
            <person name="Land M."/>
            <person name="Hauser L."/>
            <person name="Kyrpides N."/>
            <person name="Kim E."/>
            <person name="Zhao J.-S.Z."/>
            <person name="Manno D."/>
            <person name="Hawari J."/>
            <person name="Richardson P."/>
        </authorList>
    </citation>
    <scope>NUCLEOTIDE SEQUENCE [LARGE SCALE GENOMIC DNA]</scope>
    <source>
        <strain>ATCC 700345 / ANG-SQ1</strain>
    </source>
</reference>
<comment type="function">
    <text evidence="1">Acts as a chaperone.</text>
</comment>
<comment type="induction">
    <text evidence="1">By stress conditions e.g. heat shock.</text>
</comment>
<comment type="similarity">
    <text evidence="1">Belongs to the heat shock protein 70 family.</text>
</comment>
<evidence type="ECO:0000255" key="1">
    <source>
        <dbReference type="HAMAP-Rule" id="MF_00332"/>
    </source>
</evidence>
<evidence type="ECO:0000256" key="2">
    <source>
        <dbReference type="SAM" id="MobiDB-lite"/>
    </source>
</evidence>
<keyword id="KW-0067">ATP-binding</keyword>
<keyword id="KW-0143">Chaperone</keyword>
<keyword id="KW-0547">Nucleotide-binding</keyword>
<keyword id="KW-0597">Phosphoprotein</keyword>
<keyword id="KW-1185">Reference proteome</keyword>
<keyword id="KW-0346">Stress response</keyword>
<sequence>MGRIIGIDLGTTNSCVAVLDGDKARVLENAEGDRTTPSIIAYTADETLVGQSAKRQAVTNPTNTVFAIKRLIGRRFKDDEVQRDVDIMPFKIISADNGDAWVEAQGRKMAPPQISAEILKKMKKTAEDFLGEEVTEAVITVPAYFNDSQRQATKDAGRIAGLEVKRIINEPTAAALAYGIDKKQGDNIVAVYDLGGGTFDISIIEIDSVDGEQTFEVLATNGDTHLGGEDFDNRMIKYLADEFKKEQGLDLRNDPLAMQRLKEAAEKAKIELSSTTQTEVNLPYITADATGPKHLVVKITRAKLESLVEDLIKRSLEPLKVALADADLSVSDINEVILVGGQTRMPKVREEVSAFFGKELRQDVNPDEAVAIGAAVQAGVLSGDVKDVLLLDVTPLSLGIETMGSVMTKLIEKNTTIPTKASQTFSTADDNQSAVTIHVLQGERKQSSGNKSLGQFNLEGIEAAPRGMPQIEVAFDIDADGILHVSATDKKTGKAQNITIKASSGLSDEEVEAMVRDAEAHADEDAKFEELVQARNQADGMVHGTKKQIEEAGEALPADEKEKIEAAMANVETAVKGNDKEAIEKSTQELMEASAKLMEIAQAKAQAQQGQPEGEAKAAKQDDDVVDAEFEEVKDDKK</sequence>
<accession>A8H760</accession>
<feature type="chain" id="PRO_1000079246" description="Chaperone protein DnaK">
    <location>
        <begin position="1"/>
        <end position="638"/>
    </location>
</feature>
<feature type="region of interest" description="Disordered" evidence="2">
    <location>
        <begin position="601"/>
        <end position="638"/>
    </location>
</feature>
<feature type="compositionally biased region" description="Low complexity" evidence="2">
    <location>
        <begin position="601"/>
        <end position="613"/>
    </location>
</feature>
<feature type="compositionally biased region" description="Basic and acidic residues" evidence="2">
    <location>
        <begin position="614"/>
        <end position="623"/>
    </location>
</feature>
<feature type="compositionally biased region" description="Acidic residues" evidence="2">
    <location>
        <begin position="624"/>
        <end position="638"/>
    </location>
</feature>
<feature type="modified residue" description="Phosphothreonine; by autocatalysis" evidence="1">
    <location>
        <position position="198"/>
    </location>
</feature>
<protein>
    <recommendedName>
        <fullName evidence="1">Chaperone protein DnaK</fullName>
    </recommendedName>
    <alternativeName>
        <fullName evidence="1">HSP70</fullName>
    </alternativeName>
    <alternativeName>
        <fullName evidence="1">Heat shock 70 kDa protein</fullName>
    </alternativeName>
    <alternativeName>
        <fullName evidence="1">Heat shock protein 70</fullName>
    </alternativeName>
</protein>
<proteinExistence type="inferred from homology"/>
<name>DNAK_SHEPA</name>